<protein>
    <recommendedName>
        <fullName evidence="1">Gamma-glutamyl phosphate reductase</fullName>
        <shortName evidence="1">GPR</shortName>
        <ecNumber evidence="1">1.2.1.41</ecNumber>
    </recommendedName>
    <alternativeName>
        <fullName evidence="1">Glutamate-5-semialdehyde dehydrogenase</fullName>
    </alternativeName>
    <alternativeName>
        <fullName evidence="1">Glutamyl-gamma-semialdehyde dehydrogenase</fullName>
        <shortName evidence="1">GSA dehydrogenase</shortName>
    </alternativeName>
</protein>
<organism>
    <name type="scientific">Picosynechococcus sp. (strain ATCC 27264 / PCC 7002 / PR-6)</name>
    <name type="common">Agmenellum quadruplicatum</name>
    <dbReference type="NCBI Taxonomy" id="32049"/>
    <lineage>
        <taxon>Bacteria</taxon>
        <taxon>Bacillati</taxon>
        <taxon>Cyanobacteriota</taxon>
        <taxon>Cyanophyceae</taxon>
        <taxon>Oscillatoriophycideae</taxon>
        <taxon>Chroococcales</taxon>
        <taxon>Geminocystaceae</taxon>
        <taxon>Picosynechococcus</taxon>
    </lineage>
</organism>
<feature type="chain" id="PRO_0000340921" description="Gamma-glutamyl phosphate reductase">
    <location>
        <begin position="1"/>
        <end position="428"/>
    </location>
</feature>
<comment type="function">
    <text evidence="1">Catalyzes the NADPH-dependent reduction of L-glutamate 5-phosphate into L-glutamate 5-semialdehyde and phosphate. The product spontaneously undergoes cyclization to form 1-pyrroline-5-carboxylate.</text>
</comment>
<comment type="catalytic activity">
    <reaction evidence="1">
        <text>L-glutamate 5-semialdehyde + phosphate + NADP(+) = L-glutamyl 5-phosphate + NADPH + H(+)</text>
        <dbReference type="Rhea" id="RHEA:19541"/>
        <dbReference type="ChEBI" id="CHEBI:15378"/>
        <dbReference type="ChEBI" id="CHEBI:43474"/>
        <dbReference type="ChEBI" id="CHEBI:57783"/>
        <dbReference type="ChEBI" id="CHEBI:58066"/>
        <dbReference type="ChEBI" id="CHEBI:58274"/>
        <dbReference type="ChEBI" id="CHEBI:58349"/>
        <dbReference type="EC" id="1.2.1.41"/>
    </reaction>
</comment>
<comment type="pathway">
    <text evidence="1">Amino-acid biosynthesis; L-proline biosynthesis; L-glutamate 5-semialdehyde from L-glutamate: step 2/2.</text>
</comment>
<comment type="subcellular location">
    <subcellularLocation>
        <location evidence="1">Cytoplasm</location>
    </subcellularLocation>
</comment>
<comment type="similarity">
    <text evidence="1">Belongs to the gamma-glutamyl phosphate reductase family.</text>
</comment>
<sequence length="428" mass="45649">MATQLIDLAQQTRAAAQKLGTLSLAQRNDALAKVAQALAANQAKIVAANQADCEAAQRDGIAPALYARLKLGESKLQGAIAGIHDVINLPDPVGHLQLHRELDQDLVLKRVTCPLGVLGIIFEARPEALIQITSLAIKSGNGVILKGGKEAIQSCTVLTEIIQTALQDTAVSPQAVTLLTTREEIKTLLSLDQYVDLIIPRGSNAFVQYVQQNTTIPVLGHADGVCHLYVDVAADLSKTIPIVVDAKTQYPAACNAVETLLIHEKIAPEFLPQIAAALTAKQVTLRGDAATQKIMPVQPATAEDWRTEYSDLVLAIKIVPDVEAAIAHINTYGSKHTDGIITEDAATAQIFLNEVKAAGVYHNCSTRFADGFRYGFGAEVGISTQTLPPRGPVGLEGLVTYKYHLVGNGQIAATYSGPDAKPFTHRDL</sequence>
<proteinExistence type="inferred from homology"/>
<accession>B1XLA4</accession>
<name>PROA_PICP2</name>
<reference key="1">
    <citation type="submission" date="2008-02" db="EMBL/GenBank/DDBJ databases">
        <title>Complete sequence of Synechococcus sp. PCC 7002.</title>
        <authorList>
            <person name="Li T."/>
            <person name="Zhao J."/>
            <person name="Zhao C."/>
            <person name="Liu Z."/>
            <person name="Zhao F."/>
            <person name="Marquardt J."/>
            <person name="Nomura C.T."/>
            <person name="Persson S."/>
            <person name="Detter J.C."/>
            <person name="Richardson P.M."/>
            <person name="Lanz C."/>
            <person name="Schuster S.C."/>
            <person name="Wang J."/>
            <person name="Li S."/>
            <person name="Huang X."/>
            <person name="Cai T."/>
            <person name="Yu Z."/>
            <person name="Luo J."/>
            <person name="Zhao J."/>
            <person name="Bryant D.A."/>
        </authorList>
    </citation>
    <scope>NUCLEOTIDE SEQUENCE [LARGE SCALE GENOMIC DNA]</scope>
    <source>
        <strain>ATCC 27264 / PCC 7002 / PR-6</strain>
    </source>
</reference>
<evidence type="ECO:0000255" key="1">
    <source>
        <dbReference type="HAMAP-Rule" id="MF_00412"/>
    </source>
</evidence>
<gene>
    <name evidence="1" type="primary">proA</name>
    <name type="ordered locus">SYNPCC7002_A2614</name>
</gene>
<dbReference type="EC" id="1.2.1.41" evidence="1"/>
<dbReference type="EMBL" id="CP000951">
    <property type="protein sequence ID" value="ACB00591.1"/>
    <property type="molecule type" value="Genomic_DNA"/>
</dbReference>
<dbReference type="RefSeq" id="WP_012308209.1">
    <property type="nucleotide sequence ID" value="NZ_JAHHPU010000003.1"/>
</dbReference>
<dbReference type="SMR" id="B1XLA4"/>
<dbReference type="STRING" id="32049.SYNPCC7002_A2614"/>
<dbReference type="KEGG" id="syp:SYNPCC7002_A2614"/>
<dbReference type="eggNOG" id="COG0014">
    <property type="taxonomic scope" value="Bacteria"/>
</dbReference>
<dbReference type="HOGENOM" id="CLU_030231_0_1_3"/>
<dbReference type="UniPathway" id="UPA00098">
    <property type="reaction ID" value="UER00360"/>
</dbReference>
<dbReference type="Proteomes" id="UP000001688">
    <property type="component" value="Chromosome"/>
</dbReference>
<dbReference type="GO" id="GO:0005737">
    <property type="term" value="C:cytoplasm"/>
    <property type="evidence" value="ECO:0007669"/>
    <property type="project" value="UniProtKB-SubCell"/>
</dbReference>
<dbReference type="GO" id="GO:0004350">
    <property type="term" value="F:glutamate-5-semialdehyde dehydrogenase activity"/>
    <property type="evidence" value="ECO:0007669"/>
    <property type="project" value="UniProtKB-UniRule"/>
</dbReference>
<dbReference type="GO" id="GO:0050661">
    <property type="term" value="F:NADP binding"/>
    <property type="evidence" value="ECO:0007669"/>
    <property type="project" value="InterPro"/>
</dbReference>
<dbReference type="GO" id="GO:0055129">
    <property type="term" value="P:L-proline biosynthetic process"/>
    <property type="evidence" value="ECO:0007669"/>
    <property type="project" value="UniProtKB-UniRule"/>
</dbReference>
<dbReference type="CDD" id="cd07079">
    <property type="entry name" value="ALDH_F18-19_ProA-GPR"/>
    <property type="match status" value="1"/>
</dbReference>
<dbReference type="FunFam" id="3.40.309.10:FF:000006">
    <property type="entry name" value="Gamma-glutamyl phosphate reductase"/>
    <property type="match status" value="1"/>
</dbReference>
<dbReference type="Gene3D" id="3.40.605.10">
    <property type="entry name" value="Aldehyde Dehydrogenase, Chain A, domain 1"/>
    <property type="match status" value="1"/>
</dbReference>
<dbReference type="Gene3D" id="3.40.309.10">
    <property type="entry name" value="Aldehyde Dehydrogenase, Chain A, domain 2"/>
    <property type="match status" value="1"/>
</dbReference>
<dbReference type="HAMAP" id="MF_00412">
    <property type="entry name" value="ProA"/>
    <property type="match status" value="1"/>
</dbReference>
<dbReference type="InterPro" id="IPR016161">
    <property type="entry name" value="Ald_DH/histidinol_DH"/>
</dbReference>
<dbReference type="InterPro" id="IPR016163">
    <property type="entry name" value="Ald_DH_C"/>
</dbReference>
<dbReference type="InterPro" id="IPR016162">
    <property type="entry name" value="Ald_DH_N"/>
</dbReference>
<dbReference type="InterPro" id="IPR015590">
    <property type="entry name" value="Aldehyde_DH_dom"/>
</dbReference>
<dbReference type="InterPro" id="IPR020593">
    <property type="entry name" value="G-glutamylP_reductase_CS"/>
</dbReference>
<dbReference type="InterPro" id="IPR012134">
    <property type="entry name" value="Glu-5-SA_DH"/>
</dbReference>
<dbReference type="InterPro" id="IPR000965">
    <property type="entry name" value="GPR_dom"/>
</dbReference>
<dbReference type="NCBIfam" id="NF001221">
    <property type="entry name" value="PRK00197.1"/>
    <property type="match status" value="1"/>
</dbReference>
<dbReference type="NCBIfam" id="TIGR00407">
    <property type="entry name" value="proA"/>
    <property type="match status" value="1"/>
</dbReference>
<dbReference type="PANTHER" id="PTHR11063:SF8">
    <property type="entry name" value="DELTA-1-PYRROLINE-5-CARBOXYLATE SYNTHASE"/>
    <property type="match status" value="1"/>
</dbReference>
<dbReference type="PANTHER" id="PTHR11063">
    <property type="entry name" value="GLUTAMATE SEMIALDEHYDE DEHYDROGENASE"/>
    <property type="match status" value="1"/>
</dbReference>
<dbReference type="Pfam" id="PF00171">
    <property type="entry name" value="Aldedh"/>
    <property type="match status" value="1"/>
</dbReference>
<dbReference type="PIRSF" id="PIRSF000151">
    <property type="entry name" value="GPR"/>
    <property type="match status" value="1"/>
</dbReference>
<dbReference type="SUPFAM" id="SSF53720">
    <property type="entry name" value="ALDH-like"/>
    <property type="match status" value="1"/>
</dbReference>
<dbReference type="PROSITE" id="PS01223">
    <property type="entry name" value="PROA"/>
    <property type="match status" value="1"/>
</dbReference>
<keyword id="KW-0028">Amino-acid biosynthesis</keyword>
<keyword id="KW-0963">Cytoplasm</keyword>
<keyword id="KW-0521">NADP</keyword>
<keyword id="KW-0560">Oxidoreductase</keyword>
<keyword id="KW-0641">Proline biosynthesis</keyword>
<keyword id="KW-1185">Reference proteome</keyword>